<name>PAX9_SAIBB</name>
<evidence type="ECO:0000250" key="1"/>
<evidence type="ECO:0000255" key="2">
    <source>
        <dbReference type="PROSITE-ProRule" id="PRU00381"/>
    </source>
</evidence>
<dbReference type="EMBL" id="DQ067513">
    <property type="protein sequence ID" value="AAZ39856.1"/>
    <property type="molecule type" value="Genomic_DNA"/>
</dbReference>
<dbReference type="EMBL" id="DQ067511">
    <property type="protein sequence ID" value="AAZ39856.1"/>
    <property type="status" value="JOINED"/>
    <property type="molecule type" value="Genomic_DNA"/>
</dbReference>
<dbReference type="EMBL" id="DQ067512">
    <property type="protein sequence ID" value="AAZ39856.1"/>
    <property type="status" value="JOINED"/>
    <property type="molecule type" value="Genomic_DNA"/>
</dbReference>
<dbReference type="SMR" id="Q2VL60"/>
<dbReference type="STRING" id="39432.ENSSBOP00000032458"/>
<dbReference type="Proteomes" id="UP000233220">
    <property type="component" value="Whole Genome Shotgun Assembly"/>
</dbReference>
<dbReference type="GO" id="GO:0005634">
    <property type="term" value="C:nucleus"/>
    <property type="evidence" value="ECO:0007669"/>
    <property type="project" value="UniProtKB-SubCell"/>
</dbReference>
<dbReference type="GO" id="GO:0000981">
    <property type="term" value="F:DNA-binding transcription factor activity, RNA polymerase II-specific"/>
    <property type="evidence" value="ECO:0007669"/>
    <property type="project" value="TreeGrafter"/>
</dbReference>
<dbReference type="GO" id="GO:0000978">
    <property type="term" value="F:RNA polymerase II cis-regulatory region sequence-specific DNA binding"/>
    <property type="evidence" value="ECO:0007669"/>
    <property type="project" value="TreeGrafter"/>
</dbReference>
<dbReference type="CDD" id="cd00131">
    <property type="entry name" value="PAX"/>
    <property type="match status" value="1"/>
</dbReference>
<dbReference type="FunFam" id="1.10.10.10:FF:000003">
    <property type="entry name" value="Paired box protein Pax-6"/>
    <property type="match status" value="1"/>
</dbReference>
<dbReference type="FunFam" id="1.10.10.10:FF:000084">
    <property type="entry name" value="paired box protein Pax-9"/>
    <property type="match status" value="1"/>
</dbReference>
<dbReference type="Gene3D" id="1.10.10.10">
    <property type="entry name" value="Winged helix-like DNA-binding domain superfamily/Winged helix DNA-binding domain"/>
    <property type="match status" value="2"/>
</dbReference>
<dbReference type="InterPro" id="IPR009057">
    <property type="entry name" value="Homeodomain-like_sf"/>
</dbReference>
<dbReference type="InterPro" id="IPR043182">
    <property type="entry name" value="PAIRED_DNA-bd_dom"/>
</dbReference>
<dbReference type="InterPro" id="IPR001523">
    <property type="entry name" value="Paired_dom"/>
</dbReference>
<dbReference type="InterPro" id="IPR043565">
    <property type="entry name" value="PAX_fam"/>
</dbReference>
<dbReference type="InterPro" id="IPR036388">
    <property type="entry name" value="WH-like_DNA-bd_sf"/>
</dbReference>
<dbReference type="PANTHER" id="PTHR45636">
    <property type="entry name" value="PAIRED BOX PROTEIN PAX-6-RELATED-RELATED"/>
    <property type="match status" value="1"/>
</dbReference>
<dbReference type="PANTHER" id="PTHR45636:SF13">
    <property type="entry name" value="PAIRED BOX PROTEIN PAX-9"/>
    <property type="match status" value="1"/>
</dbReference>
<dbReference type="Pfam" id="PF00292">
    <property type="entry name" value="PAX"/>
    <property type="match status" value="1"/>
</dbReference>
<dbReference type="PRINTS" id="PR00027">
    <property type="entry name" value="PAIREDBOX"/>
</dbReference>
<dbReference type="SMART" id="SM00351">
    <property type="entry name" value="PAX"/>
    <property type="match status" value="1"/>
</dbReference>
<dbReference type="SUPFAM" id="SSF46689">
    <property type="entry name" value="Homeodomain-like"/>
    <property type="match status" value="1"/>
</dbReference>
<dbReference type="PROSITE" id="PS00034">
    <property type="entry name" value="PAIRED_1"/>
    <property type="match status" value="1"/>
</dbReference>
<dbReference type="PROSITE" id="PS51057">
    <property type="entry name" value="PAIRED_2"/>
    <property type="match status" value="1"/>
</dbReference>
<proteinExistence type="inferred from homology"/>
<feature type="chain" id="PRO_0000050213" description="Paired box protein Pax-9">
    <location>
        <begin position="1"/>
        <end position="341"/>
    </location>
</feature>
<feature type="DNA-binding region" description="Paired" evidence="2">
    <location>
        <begin position="4"/>
        <end position="130"/>
    </location>
</feature>
<feature type="region of interest" description="PAI subdomain" evidence="2">
    <location>
        <begin position="7"/>
        <end position="63"/>
    </location>
</feature>
<feature type="region of interest" description="RED subdomain" evidence="2">
    <location>
        <begin position="82"/>
        <end position="130"/>
    </location>
</feature>
<feature type="region of interest" description="Interaction with KDM5B" evidence="1">
    <location>
        <begin position="168"/>
        <end position="189"/>
    </location>
</feature>
<gene>
    <name type="primary">PAX9</name>
</gene>
<reference key="1">
    <citation type="journal article" date="2006" name="Mol. Biol. Evol.">
        <title>Molecular evolution of the primate developmental genes MSX1 and PAX9.</title>
        <authorList>
            <person name="Perry G.H."/>
            <person name="Verrelli B.C."/>
            <person name="Stone A.C."/>
        </authorList>
    </citation>
    <scope>NUCLEOTIDE SEQUENCE [GENOMIC DNA]</scope>
    <source>
        <strain>Isolate 90362</strain>
    </source>
</reference>
<protein>
    <recommendedName>
        <fullName>Paired box protein Pax-9</fullName>
    </recommendedName>
</protein>
<keyword id="KW-0217">Developmental protein</keyword>
<keyword id="KW-0238">DNA-binding</keyword>
<keyword id="KW-0539">Nucleus</keyword>
<keyword id="KW-0563">Paired box</keyword>
<keyword id="KW-1185">Reference proteome</keyword>
<keyword id="KW-0804">Transcription</keyword>
<keyword id="KW-0805">Transcription regulation</keyword>
<accession>Q2VL60</accession>
<sequence length="341" mass="36323">MEPAFGEVNQLGGVFVNGRPLPNAIRLRIVELAQLGIRPCDISRQLRVSHGCVSKILARYNETGSILPGAIGGSKPRVTTPTVVKHIRTYKQRDPGIFAWEIRDRLLADGVCDKYNVPSVSSISRILRNKIGNLAQQGHYDSYKQHQPAPQPALPYNHIYSYPSPITAAAAKVPTPPGVPAIPGSVAMPRTWPSSHSVTDILGIRSITDQVSDSSPYHSPKVEEWSSLGRSNFPAAAPHAVNGLEKGALEQETKYGQAPNGLPAVGSFVSASSMAPYPTPAQVSPYMTYSAAPSGYVAGHGWQHAGSTPLSPHNCDIPASLAFKGMQAAREGSHSVTASAL</sequence>
<comment type="function">
    <text evidence="1">Transcription factor required for normal development of thymus, parathyroid glands, ultimobranchial bodies, teeth, skeletal elements of skull and larynx as well as distal limbs.</text>
</comment>
<comment type="subunit">
    <text evidence="1">Interacts with KDM5B.</text>
</comment>
<comment type="subcellular location">
    <subcellularLocation>
        <location>Nucleus</location>
    </subcellularLocation>
</comment>
<organism>
    <name type="scientific">Saimiri boliviensis boliviensis</name>
    <name type="common">Bolivian squirrel monkey</name>
    <dbReference type="NCBI Taxonomy" id="39432"/>
    <lineage>
        <taxon>Eukaryota</taxon>
        <taxon>Metazoa</taxon>
        <taxon>Chordata</taxon>
        <taxon>Craniata</taxon>
        <taxon>Vertebrata</taxon>
        <taxon>Euteleostomi</taxon>
        <taxon>Mammalia</taxon>
        <taxon>Eutheria</taxon>
        <taxon>Euarchontoglires</taxon>
        <taxon>Primates</taxon>
        <taxon>Haplorrhini</taxon>
        <taxon>Platyrrhini</taxon>
        <taxon>Cebidae</taxon>
        <taxon>Saimiriinae</taxon>
        <taxon>Saimiri</taxon>
    </lineage>
</organism>